<proteinExistence type="inferred from homology"/>
<evidence type="ECO:0000255" key="1">
    <source>
        <dbReference type="HAMAP-Rule" id="MF_00237"/>
    </source>
</evidence>
<evidence type="ECO:0000256" key="2">
    <source>
        <dbReference type="SAM" id="MobiDB-lite"/>
    </source>
</evidence>
<keyword id="KW-0997">Cell inner membrane</keyword>
<keyword id="KW-1003">Cell membrane</keyword>
<keyword id="KW-0472">Membrane</keyword>
<keyword id="KW-0653">Protein transport</keyword>
<keyword id="KW-1185">Reference proteome</keyword>
<keyword id="KW-0811">Translocation</keyword>
<keyword id="KW-0812">Transmembrane</keyword>
<keyword id="KW-1133">Transmembrane helix</keyword>
<keyword id="KW-0813">Transport</keyword>
<reference key="1">
    <citation type="journal article" date="2002" name="Nat. Biotechnol.">
        <title>Genome sequence of the dissimilatory metal ion-reducing bacterium Shewanella oneidensis.</title>
        <authorList>
            <person name="Heidelberg J.F."/>
            <person name="Paulsen I.T."/>
            <person name="Nelson K.E."/>
            <person name="Gaidos E.J."/>
            <person name="Nelson W.C."/>
            <person name="Read T.D."/>
            <person name="Eisen J.A."/>
            <person name="Seshadri R."/>
            <person name="Ward N.L."/>
            <person name="Methe B.A."/>
            <person name="Clayton R.A."/>
            <person name="Meyer T."/>
            <person name="Tsapin A."/>
            <person name="Scott J."/>
            <person name="Beanan M.J."/>
            <person name="Brinkac L.M."/>
            <person name="Daugherty S.C."/>
            <person name="DeBoy R.T."/>
            <person name="Dodson R.J."/>
            <person name="Durkin A.S."/>
            <person name="Haft D.H."/>
            <person name="Kolonay J.F."/>
            <person name="Madupu R."/>
            <person name="Peterson J.D."/>
            <person name="Umayam L.A."/>
            <person name="White O."/>
            <person name="Wolf A.M."/>
            <person name="Vamathevan J.J."/>
            <person name="Weidman J.F."/>
            <person name="Impraim M."/>
            <person name="Lee K."/>
            <person name="Berry K.J."/>
            <person name="Lee C."/>
            <person name="Mueller J."/>
            <person name="Khouri H.M."/>
            <person name="Gill J."/>
            <person name="Utterback T.R."/>
            <person name="McDonald L.A."/>
            <person name="Feldblyum T.V."/>
            <person name="Smith H.O."/>
            <person name="Venter J.C."/>
            <person name="Nealson K.H."/>
            <person name="Fraser C.M."/>
        </authorList>
    </citation>
    <scope>NUCLEOTIDE SEQUENCE [LARGE SCALE GENOMIC DNA]</scope>
    <source>
        <strain>ATCC 700550 / JCM 31522 / CIP 106686 / LMG 19005 / NCIMB 14063 / MR-1</strain>
    </source>
</reference>
<name>TATB_SHEON</name>
<comment type="function">
    <text evidence="1">Part of the twin-arginine translocation (Tat) system that transports large folded proteins containing a characteristic twin-arginine motif in their signal peptide across membranes. Together with TatC, TatB is part of a receptor directly interacting with Tat signal peptides. TatB may form an oligomeric binding site that transiently accommodates folded Tat precursor proteins before their translocation.</text>
</comment>
<comment type="subunit">
    <text evidence="1">The Tat system comprises two distinct complexes: a TatABC complex, containing multiple copies of TatA, TatB and TatC subunits, and a separate TatA complex, containing only TatA subunits. Substrates initially bind to the TatABC complex, which probably triggers association of the separate TatA complex to form the active translocon.</text>
</comment>
<comment type="subcellular location">
    <subcellularLocation>
        <location evidence="1">Cell inner membrane</location>
        <topology evidence="1">Single-pass membrane protein</topology>
    </subcellularLocation>
</comment>
<comment type="similarity">
    <text evidence="1">Belongs to the TatB family.</text>
</comment>
<gene>
    <name evidence="1" type="primary">tatB</name>
    <name type="ordered locus">SO_4203</name>
</gene>
<accession>Q8E9R3</accession>
<protein>
    <recommendedName>
        <fullName evidence="1">Sec-independent protein translocase protein TatB</fullName>
    </recommendedName>
</protein>
<feature type="chain" id="PRO_0000192670" description="Sec-independent protein translocase protein TatB">
    <location>
        <begin position="1"/>
        <end position="149"/>
    </location>
</feature>
<feature type="transmembrane region" description="Helical" evidence="1">
    <location>
        <begin position="1"/>
        <end position="22"/>
    </location>
</feature>
<feature type="region of interest" description="Disordered" evidence="2">
    <location>
        <begin position="86"/>
        <end position="149"/>
    </location>
</feature>
<feature type="compositionally biased region" description="Polar residues" evidence="2">
    <location>
        <begin position="86"/>
        <end position="113"/>
    </location>
</feature>
<feature type="compositionally biased region" description="Low complexity" evidence="2">
    <location>
        <begin position="114"/>
        <end position="135"/>
    </location>
</feature>
<organism>
    <name type="scientific">Shewanella oneidensis (strain ATCC 700550 / JCM 31522 / CIP 106686 / LMG 19005 / NCIMB 14063 / MR-1)</name>
    <dbReference type="NCBI Taxonomy" id="211586"/>
    <lineage>
        <taxon>Bacteria</taxon>
        <taxon>Pseudomonadati</taxon>
        <taxon>Pseudomonadota</taxon>
        <taxon>Gammaproteobacteria</taxon>
        <taxon>Alteromonadales</taxon>
        <taxon>Shewanellaceae</taxon>
        <taxon>Shewanella</taxon>
    </lineage>
</organism>
<dbReference type="EMBL" id="AE014299">
    <property type="protein sequence ID" value="AAN57175.1"/>
    <property type="molecule type" value="Genomic_DNA"/>
</dbReference>
<dbReference type="RefSeq" id="NP_719731.1">
    <property type="nucleotide sequence ID" value="NC_004347.2"/>
</dbReference>
<dbReference type="RefSeq" id="WP_011073886.1">
    <property type="nucleotide sequence ID" value="NC_004347.2"/>
</dbReference>
<dbReference type="SMR" id="Q8E9R3"/>
<dbReference type="STRING" id="211586.SO_4203"/>
<dbReference type="PaxDb" id="211586-SO_4203"/>
<dbReference type="KEGG" id="son:SO_4203"/>
<dbReference type="PATRIC" id="fig|211586.12.peg.4059"/>
<dbReference type="eggNOG" id="COG1826">
    <property type="taxonomic scope" value="Bacteria"/>
</dbReference>
<dbReference type="HOGENOM" id="CLU_086034_1_0_6"/>
<dbReference type="OrthoDB" id="9816005at2"/>
<dbReference type="PhylomeDB" id="Q8E9R3"/>
<dbReference type="BioCyc" id="SONE211586:G1GMP-3876-MONOMER"/>
<dbReference type="Proteomes" id="UP000008186">
    <property type="component" value="Chromosome"/>
</dbReference>
<dbReference type="GO" id="GO:0033281">
    <property type="term" value="C:TAT protein transport complex"/>
    <property type="evidence" value="ECO:0007669"/>
    <property type="project" value="UniProtKB-UniRule"/>
</dbReference>
<dbReference type="GO" id="GO:0008320">
    <property type="term" value="F:protein transmembrane transporter activity"/>
    <property type="evidence" value="ECO:0007669"/>
    <property type="project" value="UniProtKB-UniRule"/>
</dbReference>
<dbReference type="GO" id="GO:0043953">
    <property type="term" value="P:protein transport by the Tat complex"/>
    <property type="evidence" value="ECO:0007669"/>
    <property type="project" value="UniProtKB-UniRule"/>
</dbReference>
<dbReference type="Gene3D" id="1.20.5.3310">
    <property type="match status" value="1"/>
</dbReference>
<dbReference type="HAMAP" id="MF_00237">
    <property type="entry name" value="TatB"/>
    <property type="match status" value="1"/>
</dbReference>
<dbReference type="InterPro" id="IPR003369">
    <property type="entry name" value="TatA/B/E"/>
</dbReference>
<dbReference type="InterPro" id="IPR018448">
    <property type="entry name" value="TatB"/>
</dbReference>
<dbReference type="NCBIfam" id="TIGR01410">
    <property type="entry name" value="tatB"/>
    <property type="match status" value="1"/>
</dbReference>
<dbReference type="PANTHER" id="PTHR33162">
    <property type="entry name" value="SEC-INDEPENDENT PROTEIN TRANSLOCASE PROTEIN TATA, CHLOROPLASTIC"/>
    <property type="match status" value="1"/>
</dbReference>
<dbReference type="PANTHER" id="PTHR33162:SF1">
    <property type="entry name" value="SEC-INDEPENDENT PROTEIN TRANSLOCASE PROTEIN TATA, CHLOROPLASTIC"/>
    <property type="match status" value="1"/>
</dbReference>
<dbReference type="Pfam" id="PF02416">
    <property type="entry name" value="TatA_B_E"/>
    <property type="match status" value="1"/>
</dbReference>
<dbReference type="PRINTS" id="PR01506">
    <property type="entry name" value="TATBPROTEIN"/>
</dbReference>
<sequence>MFDGIGFMELLLIGVLGLIVLGPERLPVAVRSVTSWVRAMKRMANSVKEELEQELKIEQLHADLKKAESKGLSNLSPELQESIEQLKQAAQSVNRPYQVQDTPSAQDNQIHNPASQTVSTEASSTSASSAPKSESIQGEDPRSNTKANG</sequence>